<reference key="1">
    <citation type="journal article" date="2005" name="Proc. Natl. Acad. Sci. U.S.A.">
        <title>The genome of the heartwater agent Ehrlichia ruminantium contains multiple tandem repeats of actively variable copy number.</title>
        <authorList>
            <person name="Collins N.E."/>
            <person name="Liebenberg J."/>
            <person name="de Villiers E.P."/>
            <person name="Brayton K.A."/>
            <person name="Louw E."/>
            <person name="Pretorius A."/>
            <person name="Faber F.E."/>
            <person name="van Heerden H."/>
            <person name="Josemans A."/>
            <person name="van Kleef M."/>
            <person name="Steyn H.C."/>
            <person name="van Strijp M.F."/>
            <person name="Zweygarth E."/>
            <person name="Jongejan F."/>
            <person name="Maillard J.C."/>
            <person name="Berthier D."/>
            <person name="Botha M."/>
            <person name="Joubert F."/>
            <person name="Corton C.H."/>
            <person name="Thomson N.R."/>
            <person name="Allsopp M.T."/>
            <person name="Allsopp B.A."/>
        </authorList>
    </citation>
    <scope>NUCLEOTIDE SEQUENCE [LARGE SCALE GENOMIC DNA]</scope>
    <source>
        <strain>Welgevonden</strain>
    </source>
</reference>
<reference key="2">
    <citation type="journal article" date="2006" name="J. Bacteriol.">
        <title>Comparative genomic analysis of three strains of Ehrlichia ruminantium reveals an active process of genome size plasticity.</title>
        <authorList>
            <person name="Frutos R."/>
            <person name="Viari A."/>
            <person name="Ferraz C."/>
            <person name="Morgat A."/>
            <person name="Eychenie S."/>
            <person name="Kandassamy Y."/>
            <person name="Chantal I."/>
            <person name="Bensaid A."/>
            <person name="Coissac E."/>
            <person name="Vachiery N."/>
            <person name="Demaille J."/>
            <person name="Martinez D."/>
        </authorList>
    </citation>
    <scope>NUCLEOTIDE SEQUENCE [LARGE SCALE GENOMIC DNA]</scope>
    <source>
        <strain>Welgevonden</strain>
    </source>
</reference>
<evidence type="ECO:0000255" key="1">
    <source>
        <dbReference type="HAMAP-Rule" id="MF_00096"/>
    </source>
</evidence>
<comment type="function">
    <text evidence="1">This protein is involved in the repair of mismatches in DNA. It is possible that it carries out the mismatch recognition step. This protein has a weak ATPase activity.</text>
</comment>
<comment type="similarity">
    <text evidence="1">Belongs to the DNA mismatch repair MutS family.</text>
</comment>
<name>MUTS_EHRRW</name>
<protein>
    <recommendedName>
        <fullName evidence="1">DNA mismatch repair protein MutS</fullName>
    </recommendedName>
</protein>
<feature type="chain" id="PRO_0000224371" description="DNA mismatch repair protein MutS">
    <location>
        <begin position="1"/>
        <end position="804"/>
    </location>
</feature>
<feature type="binding site" evidence="1">
    <location>
        <begin position="614"/>
        <end position="621"/>
    </location>
    <ligand>
        <name>ATP</name>
        <dbReference type="ChEBI" id="CHEBI:30616"/>
    </ligand>
</feature>
<sequence length="804" mass="90587">MTNSNSITPVMQQYVTLKQQYKEYLLFYRLGDFYELFFDDAIKTSKILNIVLTKKGNVPMCGVPFHSSETYLNKLVKLGYKIAICEQLETSEEARKRGYKSLVKRDVVRIVTPGTIVEDSLLEAKESNYLACIVMIKDSCAIAWLELSTGLFCYHMTYISKLDSDLLRIGPKELLVADDLLEIEAVYSIIKKYRFSITQYSSSFFDENRAYNTLCNVYGVSTLKGLGDLKGVEISVCGSLLEYVIATQKGSLPKLGFPKAYVQSDFMFIDAAALRNLELFSTQSGELEGSLIASIDFTVTASGGRLLKRCLSAPLASADAINRRLSVVEFFVNNQNLYKSVRQVLRGIADIERILTRVKIARCSPKDLYSLKLTLEKTCELVELLCKFNIDIISEFCLRLGRYEDLICILNNSLLQNSVSSVKDGGFINPECDAQLSEYIYIQECSNQLIQELRDRYRNITNIQSLKILYNNILGYYVEVSSNHLIDDKNFIHRQSLANNVRYTTTELKELESKIISAKDASISLEIKIFGQLCSDVIKYADKITITAHTIAEIDMLTSFAELAVQYSYSKPIIDDSYEFNIKKGKHPVVERNGKFIANDINLSSEQRVHLITGPNMAGKSTFLRQNALIGILAHIGSFVPAEYAHIGVIDKVFSRVGASDNIVCGYSTFMVEMIETAAVINQATERSFVILDEIGRGTGTYDGLSIAWSVIEQIHNVNKSRAIFATHYHELSKLDKYLKHIKCFCMKVEEWDGKVVFLHEIIPGASDKSYGIHVAKLAGFPQSVVNRAEYLMDKLKTNEDLLT</sequence>
<organism>
    <name type="scientific">Ehrlichia ruminantium (strain Welgevonden)</name>
    <dbReference type="NCBI Taxonomy" id="254945"/>
    <lineage>
        <taxon>Bacteria</taxon>
        <taxon>Pseudomonadati</taxon>
        <taxon>Pseudomonadota</taxon>
        <taxon>Alphaproteobacteria</taxon>
        <taxon>Rickettsiales</taxon>
        <taxon>Anaplasmataceae</taxon>
        <taxon>Ehrlichia</taxon>
    </lineage>
</organism>
<accession>Q5HBQ7</accession>
<accession>Q5FE56</accession>
<keyword id="KW-0067">ATP-binding</keyword>
<keyword id="KW-0227">DNA damage</keyword>
<keyword id="KW-0234">DNA repair</keyword>
<keyword id="KW-0238">DNA-binding</keyword>
<keyword id="KW-0547">Nucleotide-binding</keyword>
<gene>
    <name evidence="1" type="primary">mutS</name>
    <name type="ordered locus">Erum2700</name>
    <name type="ordered locus">ERWE_CDS_02740</name>
</gene>
<dbReference type="EMBL" id="CR767821">
    <property type="protein sequence ID" value="CAH57987.1"/>
    <property type="molecule type" value="Genomic_DNA"/>
</dbReference>
<dbReference type="EMBL" id="CR925678">
    <property type="protein sequence ID" value="CAI26768.1"/>
    <property type="molecule type" value="Genomic_DNA"/>
</dbReference>
<dbReference type="SMR" id="Q5HBQ7"/>
<dbReference type="KEGG" id="eru:Erum2700"/>
<dbReference type="KEGG" id="erw:ERWE_CDS_02740"/>
<dbReference type="eggNOG" id="COG0249">
    <property type="taxonomic scope" value="Bacteria"/>
</dbReference>
<dbReference type="HOGENOM" id="CLU_002472_1_3_5"/>
<dbReference type="Proteomes" id="UP000001021">
    <property type="component" value="Chromosome"/>
</dbReference>
<dbReference type="GO" id="GO:0005524">
    <property type="term" value="F:ATP binding"/>
    <property type="evidence" value="ECO:0007669"/>
    <property type="project" value="UniProtKB-UniRule"/>
</dbReference>
<dbReference type="GO" id="GO:0140664">
    <property type="term" value="F:ATP-dependent DNA damage sensor activity"/>
    <property type="evidence" value="ECO:0007669"/>
    <property type="project" value="InterPro"/>
</dbReference>
<dbReference type="GO" id="GO:0003684">
    <property type="term" value="F:damaged DNA binding"/>
    <property type="evidence" value="ECO:0007669"/>
    <property type="project" value="UniProtKB-UniRule"/>
</dbReference>
<dbReference type="GO" id="GO:0030983">
    <property type="term" value="F:mismatched DNA binding"/>
    <property type="evidence" value="ECO:0007669"/>
    <property type="project" value="InterPro"/>
</dbReference>
<dbReference type="GO" id="GO:0006298">
    <property type="term" value="P:mismatch repair"/>
    <property type="evidence" value="ECO:0007669"/>
    <property type="project" value="UniProtKB-UniRule"/>
</dbReference>
<dbReference type="CDD" id="cd03284">
    <property type="entry name" value="ABC_MutS1"/>
    <property type="match status" value="1"/>
</dbReference>
<dbReference type="FunFam" id="3.40.1170.10:FF:000001">
    <property type="entry name" value="DNA mismatch repair protein MutS"/>
    <property type="match status" value="1"/>
</dbReference>
<dbReference type="FunFam" id="3.40.50.300:FF:000870">
    <property type="entry name" value="MutS protein homolog 4"/>
    <property type="match status" value="1"/>
</dbReference>
<dbReference type="Gene3D" id="1.10.1420.10">
    <property type="match status" value="2"/>
</dbReference>
<dbReference type="Gene3D" id="3.40.1170.10">
    <property type="entry name" value="DNA repair protein MutS, domain I"/>
    <property type="match status" value="1"/>
</dbReference>
<dbReference type="Gene3D" id="3.30.420.110">
    <property type="entry name" value="MutS, connector domain"/>
    <property type="match status" value="1"/>
</dbReference>
<dbReference type="Gene3D" id="3.40.50.300">
    <property type="entry name" value="P-loop containing nucleotide triphosphate hydrolases"/>
    <property type="match status" value="1"/>
</dbReference>
<dbReference type="HAMAP" id="MF_00096">
    <property type="entry name" value="MutS"/>
    <property type="match status" value="1"/>
</dbReference>
<dbReference type="InterPro" id="IPR005748">
    <property type="entry name" value="DNA_mismatch_repair_MutS"/>
</dbReference>
<dbReference type="InterPro" id="IPR007695">
    <property type="entry name" value="DNA_mismatch_repair_MutS-lik_N"/>
</dbReference>
<dbReference type="InterPro" id="IPR017261">
    <property type="entry name" value="DNA_mismatch_repair_MutS/MSH"/>
</dbReference>
<dbReference type="InterPro" id="IPR000432">
    <property type="entry name" value="DNA_mismatch_repair_MutS_C"/>
</dbReference>
<dbReference type="InterPro" id="IPR007861">
    <property type="entry name" value="DNA_mismatch_repair_MutS_clamp"/>
</dbReference>
<dbReference type="InterPro" id="IPR007696">
    <property type="entry name" value="DNA_mismatch_repair_MutS_core"/>
</dbReference>
<dbReference type="InterPro" id="IPR016151">
    <property type="entry name" value="DNA_mismatch_repair_MutS_N"/>
</dbReference>
<dbReference type="InterPro" id="IPR036187">
    <property type="entry name" value="DNA_mismatch_repair_MutS_sf"/>
</dbReference>
<dbReference type="InterPro" id="IPR007860">
    <property type="entry name" value="DNA_mmatch_repair_MutS_con_dom"/>
</dbReference>
<dbReference type="InterPro" id="IPR045076">
    <property type="entry name" value="MutS"/>
</dbReference>
<dbReference type="InterPro" id="IPR036678">
    <property type="entry name" value="MutS_con_dom_sf"/>
</dbReference>
<dbReference type="InterPro" id="IPR027417">
    <property type="entry name" value="P-loop_NTPase"/>
</dbReference>
<dbReference type="NCBIfam" id="TIGR01070">
    <property type="entry name" value="mutS1"/>
    <property type="match status" value="1"/>
</dbReference>
<dbReference type="NCBIfam" id="NF003810">
    <property type="entry name" value="PRK05399.1"/>
    <property type="match status" value="1"/>
</dbReference>
<dbReference type="PANTHER" id="PTHR11361:SF34">
    <property type="entry name" value="DNA MISMATCH REPAIR PROTEIN MSH1, MITOCHONDRIAL"/>
    <property type="match status" value="1"/>
</dbReference>
<dbReference type="PANTHER" id="PTHR11361">
    <property type="entry name" value="DNA MISMATCH REPAIR PROTEIN MUTS FAMILY MEMBER"/>
    <property type="match status" value="1"/>
</dbReference>
<dbReference type="Pfam" id="PF01624">
    <property type="entry name" value="MutS_I"/>
    <property type="match status" value="1"/>
</dbReference>
<dbReference type="Pfam" id="PF05188">
    <property type="entry name" value="MutS_II"/>
    <property type="match status" value="1"/>
</dbReference>
<dbReference type="Pfam" id="PF05192">
    <property type="entry name" value="MutS_III"/>
    <property type="match status" value="1"/>
</dbReference>
<dbReference type="Pfam" id="PF05190">
    <property type="entry name" value="MutS_IV"/>
    <property type="match status" value="1"/>
</dbReference>
<dbReference type="Pfam" id="PF00488">
    <property type="entry name" value="MutS_V"/>
    <property type="match status" value="1"/>
</dbReference>
<dbReference type="PIRSF" id="PIRSF037677">
    <property type="entry name" value="DNA_mis_repair_Msh6"/>
    <property type="match status" value="1"/>
</dbReference>
<dbReference type="SMART" id="SM00534">
    <property type="entry name" value="MUTSac"/>
    <property type="match status" value="1"/>
</dbReference>
<dbReference type="SMART" id="SM00533">
    <property type="entry name" value="MUTSd"/>
    <property type="match status" value="1"/>
</dbReference>
<dbReference type="SUPFAM" id="SSF55271">
    <property type="entry name" value="DNA repair protein MutS, domain I"/>
    <property type="match status" value="1"/>
</dbReference>
<dbReference type="SUPFAM" id="SSF53150">
    <property type="entry name" value="DNA repair protein MutS, domain II"/>
    <property type="match status" value="1"/>
</dbReference>
<dbReference type="SUPFAM" id="SSF48334">
    <property type="entry name" value="DNA repair protein MutS, domain III"/>
    <property type="match status" value="1"/>
</dbReference>
<dbReference type="SUPFAM" id="SSF52540">
    <property type="entry name" value="P-loop containing nucleoside triphosphate hydrolases"/>
    <property type="match status" value="1"/>
</dbReference>
<dbReference type="PROSITE" id="PS00486">
    <property type="entry name" value="DNA_MISMATCH_REPAIR_2"/>
    <property type="match status" value="1"/>
</dbReference>
<proteinExistence type="inferred from homology"/>